<proteinExistence type="inferred from homology"/>
<protein>
    <recommendedName>
        <fullName evidence="1">Undecaprenyl-diphosphatase</fullName>
        <ecNumber evidence="1">3.6.1.27</ecNumber>
    </recommendedName>
    <alternativeName>
        <fullName evidence="1">Bacitracin resistance protein</fullName>
    </alternativeName>
    <alternativeName>
        <fullName evidence="1">Undecaprenyl pyrophosphate phosphatase</fullName>
    </alternativeName>
</protein>
<feature type="chain" id="PRO_0000151192" description="Undecaprenyl-diphosphatase">
    <location>
        <begin position="1"/>
        <end position="273"/>
    </location>
</feature>
<feature type="transmembrane region" description="Helical" evidence="1">
    <location>
        <begin position="6"/>
        <end position="26"/>
    </location>
</feature>
<feature type="transmembrane region" description="Helical" evidence="1">
    <location>
        <begin position="45"/>
        <end position="65"/>
    </location>
</feature>
<feature type="transmembrane region" description="Helical" evidence="1">
    <location>
        <begin position="90"/>
        <end position="110"/>
    </location>
</feature>
<feature type="transmembrane region" description="Helical" evidence="1">
    <location>
        <begin position="116"/>
        <end position="136"/>
    </location>
</feature>
<feature type="transmembrane region" description="Helical" evidence="1">
    <location>
        <begin position="190"/>
        <end position="210"/>
    </location>
</feature>
<feature type="transmembrane region" description="Helical" evidence="1">
    <location>
        <begin position="222"/>
        <end position="242"/>
    </location>
</feature>
<feature type="transmembrane region" description="Helical" evidence="1">
    <location>
        <begin position="252"/>
        <end position="272"/>
    </location>
</feature>
<accession>P67389</accession>
<accession>Q8Z3M8</accession>
<accession>Q8ZLY3</accession>
<keyword id="KW-0046">Antibiotic resistance</keyword>
<keyword id="KW-0997">Cell inner membrane</keyword>
<keyword id="KW-1003">Cell membrane</keyword>
<keyword id="KW-0133">Cell shape</keyword>
<keyword id="KW-0961">Cell wall biogenesis/degradation</keyword>
<keyword id="KW-0378">Hydrolase</keyword>
<keyword id="KW-0472">Membrane</keyword>
<keyword id="KW-0573">Peptidoglycan synthesis</keyword>
<keyword id="KW-0812">Transmembrane</keyword>
<keyword id="KW-1133">Transmembrane helix</keyword>
<name>UPPP_SALTI</name>
<dbReference type="EC" id="3.6.1.27" evidence="1"/>
<dbReference type="EMBL" id="AL513382">
    <property type="protein sequence ID" value="CAD07730.1"/>
    <property type="molecule type" value="Genomic_DNA"/>
</dbReference>
<dbReference type="EMBL" id="AE014613">
    <property type="protein sequence ID" value="AAO70668.1"/>
    <property type="molecule type" value="Genomic_DNA"/>
</dbReference>
<dbReference type="RefSeq" id="NP_457596.1">
    <property type="nucleotide sequence ID" value="NC_003198.1"/>
</dbReference>
<dbReference type="RefSeq" id="WP_001281933.1">
    <property type="nucleotide sequence ID" value="NZ_WSUR01000003.1"/>
</dbReference>
<dbReference type="SMR" id="P67389"/>
<dbReference type="STRING" id="220341.gene:17587239"/>
<dbReference type="KEGG" id="stt:t3125"/>
<dbReference type="KEGG" id="sty:STY3384"/>
<dbReference type="PATRIC" id="fig|220341.7.peg.3445"/>
<dbReference type="eggNOG" id="COG1968">
    <property type="taxonomic scope" value="Bacteria"/>
</dbReference>
<dbReference type="HOGENOM" id="CLU_060296_2_0_6"/>
<dbReference type="OMA" id="AWYRIVF"/>
<dbReference type="OrthoDB" id="9808289at2"/>
<dbReference type="Proteomes" id="UP000000541">
    <property type="component" value="Chromosome"/>
</dbReference>
<dbReference type="Proteomes" id="UP000002670">
    <property type="component" value="Chromosome"/>
</dbReference>
<dbReference type="GO" id="GO:0005886">
    <property type="term" value="C:plasma membrane"/>
    <property type="evidence" value="ECO:0007669"/>
    <property type="project" value="UniProtKB-SubCell"/>
</dbReference>
<dbReference type="GO" id="GO:0050380">
    <property type="term" value="F:undecaprenyl-diphosphatase activity"/>
    <property type="evidence" value="ECO:0007669"/>
    <property type="project" value="UniProtKB-UniRule"/>
</dbReference>
<dbReference type="GO" id="GO:0071555">
    <property type="term" value="P:cell wall organization"/>
    <property type="evidence" value="ECO:0007669"/>
    <property type="project" value="UniProtKB-KW"/>
</dbReference>
<dbReference type="GO" id="GO:0009252">
    <property type="term" value="P:peptidoglycan biosynthetic process"/>
    <property type="evidence" value="ECO:0007669"/>
    <property type="project" value="UniProtKB-KW"/>
</dbReference>
<dbReference type="GO" id="GO:0008360">
    <property type="term" value="P:regulation of cell shape"/>
    <property type="evidence" value="ECO:0007669"/>
    <property type="project" value="UniProtKB-KW"/>
</dbReference>
<dbReference type="GO" id="GO:0046677">
    <property type="term" value="P:response to antibiotic"/>
    <property type="evidence" value="ECO:0007669"/>
    <property type="project" value="UniProtKB-UniRule"/>
</dbReference>
<dbReference type="HAMAP" id="MF_01006">
    <property type="entry name" value="Undec_diphosphatase"/>
    <property type="match status" value="1"/>
</dbReference>
<dbReference type="InterPro" id="IPR003824">
    <property type="entry name" value="UppP"/>
</dbReference>
<dbReference type="NCBIfam" id="NF001388">
    <property type="entry name" value="PRK00281.1-1"/>
    <property type="match status" value="1"/>
</dbReference>
<dbReference type="NCBIfam" id="NF001389">
    <property type="entry name" value="PRK00281.1-2"/>
    <property type="match status" value="1"/>
</dbReference>
<dbReference type="NCBIfam" id="NF001390">
    <property type="entry name" value="PRK00281.1-4"/>
    <property type="match status" value="1"/>
</dbReference>
<dbReference type="NCBIfam" id="TIGR00753">
    <property type="entry name" value="undec_PP_bacA"/>
    <property type="match status" value="1"/>
</dbReference>
<dbReference type="PANTHER" id="PTHR30622">
    <property type="entry name" value="UNDECAPRENYL-DIPHOSPHATASE"/>
    <property type="match status" value="1"/>
</dbReference>
<dbReference type="PANTHER" id="PTHR30622:SF3">
    <property type="entry name" value="UNDECAPRENYL-DIPHOSPHATASE"/>
    <property type="match status" value="1"/>
</dbReference>
<dbReference type="Pfam" id="PF02673">
    <property type="entry name" value="BacA"/>
    <property type="match status" value="1"/>
</dbReference>
<gene>
    <name evidence="1" type="primary">uppP</name>
    <name type="synonym">bacA</name>
    <name type="synonym">upk</name>
    <name type="ordered locus">STY3384</name>
    <name type="ordered locus">t3125</name>
</gene>
<comment type="function">
    <text evidence="1">Catalyzes the dephosphorylation of undecaprenyl diphosphate (UPP). Confers resistance to bacitracin.</text>
</comment>
<comment type="catalytic activity">
    <reaction evidence="1">
        <text>di-trans,octa-cis-undecaprenyl diphosphate + H2O = di-trans,octa-cis-undecaprenyl phosphate + phosphate + H(+)</text>
        <dbReference type="Rhea" id="RHEA:28094"/>
        <dbReference type="ChEBI" id="CHEBI:15377"/>
        <dbReference type="ChEBI" id="CHEBI:15378"/>
        <dbReference type="ChEBI" id="CHEBI:43474"/>
        <dbReference type="ChEBI" id="CHEBI:58405"/>
        <dbReference type="ChEBI" id="CHEBI:60392"/>
        <dbReference type="EC" id="3.6.1.27"/>
    </reaction>
</comment>
<comment type="subcellular location">
    <subcellularLocation>
        <location evidence="1">Cell inner membrane</location>
        <topology evidence="1">Multi-pass membrane protein</topology>
    </subcellularLocation>
</comment>
<comment type="miscellaneous">
    <text>Bacitracin is thought to be involved in the inhibition of peptidoglycan synthesis by sequestering undecaprenyl diphosphate, thereby reducing the pool of lipid carrier available.</text>
</comment>
<comment type="similarity">
    <text evidence="1">Belongs to the UppP family.</text>
</comment>
<reference key="1">
    <citation type="journal article" date="2001" name="Nature">
        <title>Complete genome sequence of a multiple drug resistant Salmonella enterica serovar Typhi CT18.</title>
        <authorList>
            <person name="Parkhill J."/>
            <person name="Dougan G."/>
            <person name="James K.D."/>
            <person name="Thomson N.R."/>
            <person name="Pickard D."/>
            <person name="Wain J."/>
            <person name="Churcher C.M."/>
            <person name="Mungall K.L."/>
            <person name="Bentley S.D."/>
            <person name="Holden M.T.G."/>
            <person name="Sebaihia M."/>
            <person name="Baker S."/>
            <person name="Basham D."/>
            <person name="Brooks K."/>
            <person name="Chillingworth T."/>
            <person name="Connerton P."/>
            <person name="Cronin A."/>
            <person name="Davis P."/>
            <person name="Davies R.M."/>
            <person name="Dowd L."/>
            <person name="White N."/>
            <person name="Farrar J."/>
            <person name="Feltwell T."/>
            <person name="Hamlin N."/>
            <person name="Haque A."/>
            <person name="Hien T.T."/>
            <person name="Holroyd S."/>
            <person name="Jagels K."/>
            <person name="Krogh A."/>
            <person name="Larsen T.S."/>
            <person name="Leather S."/>
            <person name="Moule S."/>
            <person name="O'Gaora P."/>
            <person name="Parry C."/>
            <person name="Quail M.A."/>
            <person name="Rutherford K.M."/>
            <person name="Simmonds M."/>
            <person name="Skelton J."/>
            <person name="Stevens K."/>
            <person name="Whitehead S."/>
            <person name="Barrell B.G."/>
        </authorList>
    </citation>
    <scope>NUCLEOTIDE SEQUENCE [LARGE SCALE GENOMIC DNA]</scope>
    <source>
        <strain>CT18</strain>
    </source>
</reference>
<reference key="2">
    <citation type="journal article" date="2003" name="J. Bacteriol.">
        <title>Comparative genomics of Salmonella enterica serovar Typhi strains Ty2 and CT18.</title>
        <authorList>
            <person name="Deng W."/>
            <person name="Liou S.-R."/>
            <person name="Plunkett G. III"/>
            <person name="Mayhew G.F."/>
            <person name="Rose D.J."/>
            <person name="Burland V."/>
            <person name="Kodoyianni V."/>
            <person name="Schwartz D.C."/>
            <person name="Blattner F.R."/>
        </authorList>
    </citation>
    <scope>NUCLEOTIDE SEQUENCE [LARGE SCALE GENOMIC DNA]</scope>
    <source>
        <strain>ATCC 700931 / Ty2</strain>
    </source>
</reference>
<evidence type="ECO:0000255" key="1">
    <source>
        <dbReference type="HAMAP-Rule" id="MF_01006"/>
    </source>
</evidence>
<organism>
    <name type="scientific">Salmonella typhi</name>
    <dbReference type="NCBI Taxonomy" id="90370"/>
    <lineage>
        <taxon>Bacteria</taxon>
        <taxon>Pseudomonadati</taxon>
        <taxon>Pseudomonadota</taxon>
        <taxon>Gammaproteobacteria</taxon>
        <taxon>Enterobacterales</taxon>
        <taxon>Enterobacteriaceae</taxon>
        <taxon>Salmonella</taxon>
    </lineage>
</organism>
<sequence length="273" mass="29792">MSDMHSLLIAAILGVVEGLTEFLPVSSTGHMIIVGHLLGFEGDTAKTFEVVIQLGSILAVVVMFWRRLFGLIGIHFGRPLQREGESKGRLTLIHILLGMIPAVVLGLVFHDTIKSLFNPINVMYALVVGGLLLIAAECLKPKEPRAPGLDDMTYRQAFMIGCFQCLALWPGFSRSGATISGGMLMGVSRYAASEFSFLLAVPMMMGATVLDLYKSWSFLTAADIPMFAVGFVTAFVVALIAIKTFLQLIKRISFIPFAIYRFVVAAAVYVVFF</sequence>